<feature type="signal peptide" evidence="1">
    <location>
        <begin position="1"/>
        <end position="18"/>
    </location>
</feature>
<feature type="chain" id="PRO_0000022637" description="Uroplakin-3a">
    <location>
        <begin position="19"/>
        <end position="287"/>
    </location>
</feature>
<feature type="topological domain" description="Lumenal" evidence="2">
    <location>
        <begin position="19"/>
        <end position="207"/>
    </location>
</feature>
<feature type="transmembrane region" description="Helical" evidence="2">
    <location>
        <begin position="208"/>
        <end position="235"/>
    </location>
</feature>
<feature type="topological domain" description="Cytoplasmic" evidence="2">
    <location>
        <begin position="236"/>
        <end position="287"/>
    </location>
</feature>
<feature type="region of interest" description="Disordered" evidence="3">
    <location>
        <begin position="242"/>
        <end position="287"/>
    </location>
</feature>
<feature type="compositionally biased region" description="Polar residues" evidence="3">
    <location>
        <begin position="261"/>
        <end position="270"/>
    </location>
</feature>
<feature type="glycosylation site" description="N-linked (GlcNAc...) asparagine" evidence="2">
    <location>
        <position position="74"/>
    </location>
</feature>
<feature type="glycosylation site" description="N-linked (GlcNAc...) asparagine" evidence="2">
    <location>
        <position position="139"/>
    </location>
</feature>
<feature type="glycosylation site" description="N-linked (GlcNAc...) asparagine" evidence="2">
    <location>
        <position position="170"/>
    </location>
</feature>
<feature type="splice variant" id="VSP_030004" description="In isoform 2." evidence="8">
    <original>AISRNASVQDSTNTPLGSTFLQTEGGRTGPYKAVAFDLIPCSDLPSLDAIGDVSKASQILNAYLVRVGANGTCLWDPNFQGLCNAPLSAATEYRFKYVLVNMSTGLVEDQTLWSDPIRTNQL</original>
    <variation>V</variation>
    <location>
        <begin position="70"/>
        <end position="191"/>
    </location>
</feature>
<feature type="sequence variant" id="VAR_044399" description="In dbSNP:rs6006979.">
    <original>Q</original>
    <variation>L</variation>
    <location>
        <position position="91"/>
    </location>
</feature>
<feature type="sequence variant" id="VAR_020158" description="In dbSNP:rs1057353." evidence="6">
    <original>A</original>
    <variation>P</variation>
    <location>
        <position position="154"/>
    </location>
</feature>
<feature type="sequence variant" id="VAR_044400" description="Found in a patient with unilateral multicystic kidney disease; uncertain significance; dbSNP:rs121918187." evidence="5">
    <original>G</original>
    <variation>D</variation>
    <location>
        <position position="202"/>
    </location>
</feature>
<feature type="sequence variant" id="VAR_044401" description="Found in patients with renal adysplasia; uncertain significance; normal targeting to the cell surface; dbSNP:rs121918186." evidence="4">
    <original>P</original>
    <variation>L</variation>
    <location>
        <position position="273"/>
    </location>
</feature>
<feature type="sequence conflict" description="In Ref. 2; BAA31460/BAA25678." evidence="9" ref="2">
    <original>D</original>
    <variation>A</variation>
    <location>
        <position position="236"/>
    </location>
</feature>
<dbReference type="EMBL" id="AF085808">
    <property type="protein sequence ID" value="AAC34888.1"/>
    <property type="molecule type" value="mRNA"/>
</dbReference>
<dbReference type="EMBL" id="AB010637">
    <property type="protein sequence ID" value="BAA31460.1"/>
    <property type="molecule type" value="mRNA"/>
</dbReference>
<dbReference type="EMBL" id="AB010116">
    <property type="protein sequence ID" value="BAA25678.1"/>
    <property type="molecule type" value="mRNA"/>
</dbReference>
<dbReference type="EMBL" id="CR456608">
    <property type="protein sequence ID" value="CAG30494.1"/>
    <property type="molecule type" value="mRNA"/>
</dbReference>
<dbReference type="EMBL" id="AL008718">
    <property type="status" value="NOT_ANNOTATED_CDS"/>
    <property type="molecule type" value="Genomic_DNA"/>
</dbReference>
<dbReference type="EMBL" id="BC069544">
    <property type="protein sequence ID" value="AAH69544.1"/>
    <property type="molecule type" value="mRNA"/>
</dbReference>
<dbReference type="EMBL" id="BC108900">
    <property type="protein sequence ID" value="AAI08901.1"/>
    <property type="molecule type" value="mRNA"/>
</dbReference>
<dbReference type="CCDS" id="CCDS14064.1">
    <molecule id="O75631-1"/>
</dbReference>
<dbReference type="CCDS" id="CCDS54539.1">
    <molecule id="O75631-2"/>
</dbReference>
<dbReference type="RefSeq" id="NP_001161046.1">
    <molecule id="O75631-2"/>
    <property type="nucleotide sequence ID" value="NM_001167574.2"/>
</dbReference>
<dbReference type="RefSeq" id="NP_008884.1">
    <molecule id="O75631-1"/>
    <property type="nucleotide sequence ID" value="NM_006953.4"/>
</dbReference>
<dbReference type="SMR" id="O75631"/>
<dbReference type="BioGRID" id="113226">
    <property type="interactions" value="3"/>
</dbReference>
<dbReference type="FunCoup" id="O75631">
    <property type="interactions" value="80"/>
</dbReference>
<dbReference type="IntAct" id="O75631">
    <property type="interactions" value="2"/>
</dbReference>
<dbReference type="STRING" id="9606.ENSP00000216211"/>
<dbReference type="TCDB" id="8.A.90.2.1">
    <property type="family name" value="the uroplakin 2/3 (upk2/3) family"/>
</dbReference>
<dbReference type="GlyCosmos" id="O75631">
    <property type="glycosylation" value="3 sites, No reported glycans"/>
</dbReference>
<dbReference type="GlyGen" id="O75631">
    <property type="glycosylation" value="3 sites"/>
</dbReference>
<dbReference type="iPTMnet" id="O75631"/>
<dbReference type="PhosphoSitePlus" id="O75631"/>
<dbReference type="BioMuta" id="UPK3A"/>
<dbReference type="MassIVE" id="O75631"/>
<dbReference type="PaxDb" id="9606-ENSP00000216211"/>
<dbReference type="PeptideAtlas" id="O75631"/>
<dbReference type="ProteomicsDB" id="50129">
    <molecule id="O75631-1"/>
</dbReference>
<dbReference type="ProteomicsDB" id="50130">
    <molecule id="O75631-2"/>
</dbReference>
<dbReference type="Antibodypedia" id="13681">
    <property type="antibodies" value="284 antibodies from 26 providers"/>
</dbReference>
<dbReference type="DNASU" id="7380"/>
<dbReference type="Ensembl" id="ENST00000216211.9">
    <molecule id="O75631-1"/>
    <property type="protein sequence ID" value="ENSP00000216211.4"/>
    <property type="gene ID" value="ENSG00000100373.10"/>
</dbReference>
<dbReference type="Ensembl" id="ENST00000396082.2">
    <molecule id="O75631-2"/>
    <property type="protein sequence ID" value="ENSP00000379391.2"/>
    <property type="gene ID" value="ENSG00000100373.10"/>
</dbReference>
<dbReference type="GeneID" id="7380"/>
<dbReference type="KEGG" id="hsa:7380"/>
<dbReference type="MANE-Select" id="ENST00000216211.9">
    <property type="protein sequence ID" value="ENSP00000216211.4"/>
    <property type="RefSeq nucleotide sequence ID" value="NM_006953.4"/>
    <property type="RefSeq protein sequence ID" value="NP_008884.1"/>
</dbReference>
<dbReference type="UCSC" id="uc003bfy.4">
    <molecule id="O75631-1"/>
    <property type="organism name" value="human"/>
</dbReference>
<dbReference type="AGR" id="HGNC:12580"/>
<dbReference type="CTD" id="7380"/>
<dbReference type="DisGeNET" id="7380"/>
<dbReference type="GeneCards" id="UPK3A"/>
<dbReference type="HGNC" id="HGNC:12580">
    <property type="gene designation" value="UPK3A"/>
</dbReference>
<dbReference type="HPA" id="ENSG00000100373">
    <property type="expression patterns" value="Group enriched (prostate, skeletal muscle, urinary bladder)"/>
</dbReference>
<dbReference type="MalaCards" id="UPK3A"/>
<dbReference type="MIM" id="611559">
    <property type="type" value="gene"/>
</dbReference>
<dbReference type="neXtProt" id="NX_O75631"/>
<dbReference type="OpenTargets" id="ENSG00000100373"/>
<dbReference type="Orphanet" id="93100">
    <property type="disease" value="Renal agenesis, unilateral"/>
</dbReference>
<dbReference type="PharmGKB" id="PA37212"/>
<dbReference type="VEuPathDB" id="HostDB:ENSG00000100373"/>
<dbReference type="eggNOG" id="ENOG502S14V">
    <property type="taxonomic scope" value="Eukaryota"/>
</dbReference>
<dbReference type="GeneTree" id="ENSGT00940000153392"/>
<dbReference type="HOGENOM" id="CLU_082608_1_0_1"/>
<dbReference type="InParanoid" id="O75631"/>
<dbReference type="OMA" id="EKPFCVF"/>
<dbReference type="OrthoDB" id="9945328at2759"/>
<dbReference type="PAN-GO" id="O75631">
    <property type="GO annotations" value="4 GO annotations based on evolutionary models"/>
</dbReference>
<dbReference type="PhylomeDB" id="O75631"/>
<dbReference type="TreeFam" id="TF336628"/>
<dbReference type="PathwayCommons" id="O75631"/>
<dbReference type="SignaLink" id="O75631"/>
<dbReference type="BioGRID-ORCS" id="7380">
    <property type="hits" value="7 hits in 1146 CRISPR screens"/>
</dbReference>
<dbReference type="ChiTaRS" id="UPK3A">
    <property type="organism name" value="human"/>
</dbReference>
<dbReference type="GeneWiki" id="UPK3A"/>
<dbReference type="GenomeRNAi" id="7380"/>
<dbReference type="Pharos" id="O75631">
    <property type="development level" value="Tbio"/>
</dbReference>
<dbReference type="PRO" id="PR:O75631"/>
<dbReference type="Proteomes" id="UP000005640">
    <property type="component" value="Chromosome 22"/>
</dbReference>
<dbReference type="RNAct" id="O75631">
    <property type="molecule type" value="protein"/>
</dbReference>
<dbReference type="Bgee" id="ENSG00000100373">
    <property type="expression patterns" value="Expressed in gastrocnemius and 91 other cell types or tissues"/>
</dbReference>
<dbReference type="GO" id="GO:0120001">
    <property type="term" value="C:apical plasma membrane urothelial plaque"/>
    <property type="evidence" value="ECO:0007669"/>
    <property type="project" value="Ensembl"/>
</dbReference>
<dbReference type="GO" id="GO:0005789">
    <property type="term" value="C:endoplasmic reticulum membrane"/>
    <property type="evidence" value="ECO:0007669"/>
    <property type="project" value="UniProtKB-SubCell"/>
</dbReference>
<dbReference type="GO" id="GO:0070062">
    <property type="term" value="C:extracellular exosome"/>
    <property type="evidence" value="ECO:0007005"/>
    <property type="project" value="UniProtKB"/>
</dbReference>
<dbReference type="GO" id="GO:0005886">
    <property type="term" value="C:plasma membrane"/>
    <property type="evidence" value="ECO:0000318"/>
    <property type="project" value="GO_Central"/>
</dbReference>
<dbReference type="GO" id="GO:0000902">
    <property type="term" value="P:cell morphogenesis"/>
    <property type="evidence" value="ECO:0007669"/>
    <property type="project" value="Ensembl"/>
</dbReference>
<dbReference type="GO" id="GO:0030855">
    <property type="term" value="P:epithelial cell differentiation"/>
    <property type="evidence" value="ECO:0000314"/>
    <property type="project" value="UniProtKB"/>
</dbReference>
<dbReference type="GO" id="GO:0001822">
    <property type="term" value="P:kidney development"/>
    <property type="evidence" value="ECO:0007669"/>
    <property type="project" value="Ensembl"/>
</dbReference>
<dbReference type="GO" id="GO:0055075">
    <property type="term" value="P:potassium ion homeostasis"/>
    <property type="evidence" value="ECO:0007669"/>
    <property type="project" value="Ensembl"/>
</dbReference>
<dbReference type="GO" id="GO:0055078">
    <property type="term" value="P:sodium ion homeostasis"/>
    <property type="evidence" value="ECO:0007669"/>
    <property type="project" value="Ensembl"/>
</dbReference>
<dbReference type="GO" id="GO:0015840">
    <property type="term" value="P:urea transport"/>
    <property type="evidence" value="ECO:0000318"/>
    <property type="project" value="GO_Central"/>
</dbReference>
<dbReference type="GO" id="GO:0060157">
    <property type="term" value="P:urinary bladder development"/>
    <property type="evidence" value="ECO:0007669"/>
    <property type="project" value="Ensembl"/>
</dbReference>
<dbReference type="GO" id="GO:0006833">
    <property type="term" value="P:water transport"/>
    <property type="evidence" value="ECO:0000318"/>
    <property type="project" value="GO_Central"/>
</dbReference>
<dbReference type="CDD" id="cd09970">
    <property type="entry name" value="UP_IIIa"/>
    <property type="match status" value="1"/>
</dbReference>
<dbReference type="InterPro" id="IPR024831">
    <property type="entry name" value="Uroplakin-3"/>
</dbReference>
<dbReference type="InterPro" id="IPR024825">
    <property type="entry name" value="Uroplakin-3a"/>
</dbReference>
<dbReference type="PANTHER" id="PTHR15446">
    <property type="entry name" value="UROPLAKIN III"/>
    <property type="match status" value="1"/>
</dbReference>
<dbReference type="PANTHER" id="PTHR15446:SF17">
    <property type="entry name" value="UROPLAKIN-3A"/>
    <property type="match status" value="1"/>
</dbReference>
<gene>
    <name type="primary">UPK3A</name>
    <name type="synonym">UPK3</name>
</gene>
<comment type="function">
    <text evidence="1">Component of the asymmetric unit membrane (AUM); a highly specialized biomembrane elaborated by terminally differentiated urothelial cells. May play an important role in AUM-cytoskeleton interaction in terminally differentiated urothelial cells. It also contributes to the formation of urothelial glycocalyx which may play an important role in preventing bacterial adherence (By similarity).</text>
</comment>
<comment type="subunit">
    <text evidence="1">Heterodimer with uroplakin-1B (UPK1B).</text>
</comment>
<comment type="interaction">
    <interactant intactId="EBI-10188907">
        <id>O75631</id>
    </interactant>
    <interactant intactId="EBI-347996">
        <id>O43765</id>
        <label>SGTA</label>
    </interactant>
    <organismsDiffer>false</organismsDiffer>
    <experiments>3</experiments>
</comment>
<comment type="interaction">
    <interactant intactId="EBI-10188907">
        <id>O75631</id>
    </interactant>
    <interactant intactId="EBI-744081">
        <id>Q96EQ0</id>
        <label>SGTB</label>
    </interactant>
    <organismsDiffer>false</organismsDiffer>
    <experiments>3</experiments>
</comment>
<comment type="subcellular location">
    <subcellularLocation>
        <location evidence="1">Endoplasmic reticulum membrane</location>
        <topology evidence="1">Single-pass type I membrane protein</topology>
    </subcellularLocation>
    <text evidence="1">Heterodimer formation with UPK1B is a prerequisite to exit out of the endoplasmic reticulum (ER).</text>
</comment>
<comment type="alternative products">
    <event type="alternative splicing"/>
    <isoform>
        <id>O75631-1</id>
        <name>1</name>
        <sequence type="displayed"/>
    </isoform>
    <isoform>
        <id>O75631-2</id>
        <name>2</name>
        <sequence type="described" ref="VSP_030004"/>
    </isoform>
</comment>
<comment type="tissue specificity">
    <text evidence="7">Expressed in ureter.</text>
</comment>
<comment type="disease">
    <text>Mutations in UPK3A have been detected in patients with renal adyplasia suggesting a possible involvement of this gene in kidney and urinary tract anomalies.</text>
</comment>
<comment type="similarity">
    <text evidence="9">Belongs to the uroplakin-3 family.</text>
</comment>
<proteinExistence type="evidence at protein level"/>
<organism>
    <name type="scientific">Homo sapiens</name>
    <name type="common">Human</name>
    <dbReference type="NCBI Taxonomy" id="9606"/>
    <lineage>
        <taxon>Eukaryota</taxon>
        <taxon>Metazoa</taxon>
        <taxon>Chordata</taxon>
        <taxon>Craniata</taxon>
        <taxon>Vertebrata</taxon>
        <taxon>Euteleostomi</taxon>
        <taxon>Mammalia</taxon>
        <taxon>Eutheria</taxon>
        <taxon>Euarchontoglires</taxon>
        <taxon>Primates</taxon>
        <taxon>Haplorrhini</taxon>
        <taxon>Catarrhini</taxon>
        <taxon>Hominidae</taxon>
        <taxon>Homo</taxon>
    </lineage>
</organism>
<reference key="1">
    <citation type="submission" date="1998-08" db="EMBL/GenBank/DDBJ databases">
        <authorList>
            <person name="Geall K."/>
            <person name="Hall G."/>
            <person name="Smith B."/>
            <person name="Southgate J."/>
        </authorList>
    </citation>
    <scope>NUCLEOTIDE SEQUENCE [MRNA] (ISOFORM 1)</scope>
    <source>
        <tissue>Ureter</tissue>
    </source>
</reference>
<reference key="2">
    <citation type="journal article" date="1998" name="Jpn. J. Cancer Res.">
        <title>Expression of uroplakin Ib and uroplakin III genes in tissues and peripheral blood of patients with transitional cell carcinoma.</title>
        <authorList>
            <person name="Yuasa T."/>
            <person name="Yoshiki T."/>
            <person name="Tanaka T."/>
            <person name="Kim C.J."/>
            <person name="Isono T."/>
            <person name="Okada Y."/>
        </authorList>
    </citation>
    <scope>NUCLEOTIDE SEQUENCE [MRNA] (ISOFORM 1)</scope>
    <scope>VARIANT PRO-154</scope>
    <source>
        <tissue>Urinary bladder urothelium</tissue>
    </source>
</reference>
<reference key="3">
    <citation type="journal article" date="2004" name="Genome Biol.">
        <title>A genome annotation-driven approach to cloning the human ORFeome.</title>
        <authorList>
            <person name="Collins J.E."/>
            <person name="Wright C.L."/>
            <person name="Edwards C.A."/>
            <person name="Davis M.P."/>
            <person name="Grinham J.A."/>
            <person name="Cole C.G."/>
            <person name="Goward M.E."/>
            <person name="Aguado B."/>
            <person name="Mallya M."/>
            <person name="Mokrab Y."/>
            <person name="Huckle E.J."/>
            <person name="Beare D.M."/>
            <person name="Dunham I."/>
        </authorList>
    </citation>
    <scope>NUCLEOTIDE SEQUENCE [LARGE SCALE MRNA] (ISOFORM 1)</scope>
</reference>
<reference key="4">
    <citation type="journal article" date="1999" name="Nature">
        <title>The DNA sequence of human chromosome 22.</title>
        <authorList>
            <person name="Dunham I."/>
            <person name="Hunt A.R."/>
            <person name="Collins J.E."/>
            <person name="Bruskiewich R."/>
            <person name="Beare D.M."/>
            <person name="Clamp M."/>
            <person name="Smink L.J."/>
            <person name="Ainscough R."/>
            <person name="Almeida J.P."/>
            <person name="Babbage A.K."/>
            <person name="Bagguley C."/>
            <person name="Bailey J."/>
            <person name="Barlow K.F."/>
            <person name="Bates K.N."/>
            <person name="Beasley O.P."/>
            <person name="Bird C.P."/>
            <person name="Blakey S.E."/>
            <person name="Bridgeman A.M."/>
            <person name="Buck D."/>
            <person name="Burgess J."/>
            <person name="Burrill W.D."/>
            <person name="Burton J."/>
            <person name="Carder C."/>
            <person name="Carter N.P."/>
            <person name="Chen Y."/>
            <person name="Clark G."/>
            <person name="Clegg S.M."/>
            <person name="Cobley V.E."/>
            <person name="Cole C.G."/>
            <person name="Collier R.E."/>
            <person name="Connor R."/>
            <person name="Conroy D."/>
            <person name="Corby N.R."/>
            <person name="Coville G.J."/>
            <person name="Cox A.V."/>
            <person name="Davis J."/>
            <person name="Dawson E."/>
            <person name="Dhami P.D."/>
            <person name="Dockree C."/>
            <person name="Dodsworth S.J."/>
            <person name="Durbin R.M."/>
            <person name="Ellington A.G."/>
            <person name="Evans K.L."/>
            <person name="Fey J.M."/>
            <person name="Fleming K."/>
            <person name="French L."/>
            <person name="Garner A.A."/>
            <person name="Gilbert J.G.R."/>
            <person name="Goward M.E."/>
            <person name="Grafham D.V."/>
            <person name="Griffiths M.N.D."/>
            <person name="Hall C."/>
            <person name="Hall R.E."/>
            <person name="Hall-Tamlyn G."/>
            <person name="Heathcott R.W."/>
            <person name="Ho S."/>
            <person name="Holmes S."/>
            <person name="Hunt S.E."/>
            <person name="Jones M.C."/>
            <person name="Kershaw J."/>
            <person name="Kimberley A.M."/>
            <person name="King A."/>
            <person name="Laird G.K."/>
            <person name="Langford C.F."/>
            <person name="Leversha M.A."/>
            <person name="Lloyd C."/>
            <person name="Lloyd D.M."/>
            <person name="Martyn I.D."/>
            <person name="Mashreghi-Mohammadi M."/>
            <person name="Matthews L.H."/>
            <person name="Mccann O.T."/>
            <person name="Mcclay J."/>
            <person name="Mclaren S."/>
            <person name="McMurray A.A."/>
            <person name="Milne S.A."/>
            <person name="Mortimore B.J."/>
            <person name="Odell C.N."/>
            <person name="Pavitt R."/>
            <person name="Pearce A.V."/>
            <person name="Pearson D."/>
            <person name="Phillimore B.J.C.T."/>
            <person name="Phillips S.H."/>
            <person name="Plumb R.W."/>
            <person name="Ramsay H."/>
            <person name="Ramsey Y."/>
            <person name="Rogers L."/>
            <person name="Ross M.T."/>
            <person name="Scott C.E."/>
            <person name="Sehra H.K."/>
            <person name="Skuce C.D."/>
            <person name="Smalley S."/>
            <person name="Smith M.L."/>
            <person name="Soderlund C."/>
            <person name="Spragon L."/>
            <person name="Steward C.A."/>
            <person name="Sulston J.E."/>
            <person name="Swann R.M."/>
            <person name="Vaudin M."/>
            <person name="Wall M."/>
            <person name="Wallis J.M."/>
            <person name="Whiteley M.N."/>
            <person name="Willey D.L."/>
            <person name="Williams L."/>
            <person name="Williams S.A."/>
            <person name="Williamson H."/>
            <person name="Wilmer T.E."/>
            <person name="Wilming L."/>
            <person name="Wright C.L."/>
            <person name="Hubbard T."/>
            <person name="Bentley D.R."/>
            <person name="Beck S."/>
            <person name="Rogers J."/>
            <person name="Shimizu N."/>
            <person name="Minoshima S."/>
            <person name="Kawasaki K."/>
            <person name="Sasaki T."/>
            <person name="Asakawa S."/>
            <person name="Kudoh J."/>
            <person name="Shintani A."/>
            <person name="Shibuya K."/>
            <person name="Yoshizaki Y."/>
            <person name="Aoki N."/>
            <person name="Mitsuyama S."/>
            <person name="Roe B.A."/>
            <person name="Chen F."/>
            <person name="Chu L."/>
            <person name="Crabtree J."/>
            <person name="Deschamps S."/>
            <person name="Do A."/>
            <person name="Do T."/>
            <person name="Dorman A."/>
            <person name="Fang F."/>
            <person name="Fu Y."/>
            <person name="Hu P."/>
            <person name="Hua A."/>
            <person name="Kenton S."/>
            <person name="Lai H."/>
            <person name="Lao H.I."/>
            <person name="Lewis J."/>
            <person name="Lewis S."/>
            <person name="Lin S.-P."/>
            <person name="Loh P."/>
            <person name="Malaj E."/>
            <person name="Nguyen T."/>
            <person name="Pan H."/>
            <person name="Phan S."/>
            <person name="Qi S."/>
            <person name="Qian Y."/>
            <person name="Ray L."/>
            <person name="Ren Q."/>
            <person name="Shaull S."/>
            <person name="Sloan D."/>
            <person name="Song L."/>
            <person name="Wang Q."/>
            <person name="Wang Y."/>
            <person name="Wang Z."/>
            <person name="White J."/>
            <person name="Willingham D."/>
            <person name="Wu H."/>
            <person name="Yao Z."/>
            <person name="Zhan M."/>
            <person name="Zhang G."/>
            <person name="Chissoe S."/>
            <person name="Murray J."/>
            <person name="Miller N."/>
            <person name="Minx P."/>
            <person name="Fulton R."/>
            <person name="Johnson D."/>
            <person name="Bemis G."/>
            <person name="Bentley D."/>
            <person name="Bradshaw H."/>
            <person name="Bourne S."/>
            <person name="Cordes M."/>
            <person name="Du Z."/>
            <person name="Fulton L."/>
            <person name="Goela D."/>
            <person name="Graves T."/>
            <person name="Hawkins J."/>
            <person name="Hinds K."/>
            <person name="Kemp K."/>
            <person name="Latreille P."/>
            <person name="Layman D."/>
            <person name="Ozersky P."/>
            <person name="Rohlfing T."/>
            <person name="Scheet P."/>
            <person name="Walker C."/>
            <person name="Wamsley A."/>
            <person name="Wohldmann P."/>
            <person name="Pepin K."/>
            <person name="Nelson J."/>
            <person name="Korf I."/>
            <person name="Bedell J.A."/>
            <person name="Hillier L.W."/>
            <person name="Mardis E."/>
            <person name="Waterston R."/>
            <person name="Wilson R."/>
            <person name="Emanuel B.S."/>
            <person name="Shaikh T."/>
            <person name="Kurahashi H."/>
            <person name="Saitta S."/>
            <person name="Budarf M.L."/>
            <person name="McDermid H.E."/>
            <person name="Johnson A."/>
            <person name="Wong A.C.C."/>
            <person name="Morrow B.E."/>
            <person name="Edelmann L."/>
            <person name="Kim U.J."/>
            <person name="Shizuya H."/>
            <person name="Simon M.I."/>
            <person name="Dumanski J.P."/>
            <person name="Peyrard M."/>
            <person name="Kedra D."/>
            <person name="Seroussi E."/>
            <person name="Fransson I."/>
            <person name="Tapia I."/>
            <person name="Bruder C.E."/>
            <person name="O'Brien K.P."/>
            <person name="Wilkinson P."/>
            <person name="Bodenteich A."/>
            <person name="Hartman K."/>
            <person name="Hu X."/>
            <person name="Khan A.S."/>
            <person name="Lane L."/>
            <person name="Tilahun Y."/>
            <person name="Wright H."/>
        </authorList>
    </citation>
    <scope>NUCLEOTIDE SEQUENCE [LARGE SCALE GENOMIC DNA]</scope>
</reference>
<reference key="5">
    <citation type="journal article" date="2004" name="Genome Res.">
        <title>The status, quality, and expansion of the NIH full-length cDNA project: the Mammalian Gene Collection (MGC).</title>
        <authorList>
            <consortium name="The MGC Project Team"/>
        </authorList>
    </citation>
    <scope>NUCLEOTIDE SEQUENCE [LARGE SCALE MRNA] (ISOFORMS 1 AND 2)</scope>
</reference>
<reference key="6">
    <citation type="journal article" date="1998" name="Am. J. Pathol.">
        <title>Uroplakin gene expression by normal and neoplastic human urothelium.</title>
        <authorList>
            <person name="Lobban E.D."/>
            <person name="Smith B.A."/>
            <person name="Hall G.D."/>
            <person name="Harnden P."/>
            <person name="Roberts P."/>
            <person name="Selby P.J."/>
            <person name="Trejdosiewicz L.K."/>
            <person name="Southgate J."/>
        </authorList>
    </citation>
    <scope>TISSUE SPECIFICITY</scope>
</reference>
<reference key="7">
    <citation type="journal article" date="2005" name="J. Am. Soc. Nephrol.">
        <title>De novo Uroplakin IIIa heterozygous mutations cause human renal adysplasia leading to severe kidney failure.</title>
        <authorList>
            <person name="Jenkins D."/>
            <person name="Bitner-Glindzicz M."/>
            <person name="Malcolm S."/>
            <person name="Hu C.-C.A."/>
            <person name="Allison J."/>
            <person name="Winyard P.J.D."/>
            <person name="Gullett A.M."/>
            <person name="Thomas D.F.M."/>
            <person name="Belk R.A."/>
            <person name="Feather S.A."/>
            <person name="Sun T.-T."/>
            <person name="Woolf A.S."/>
        </authorList>
    </citation>
    <scope>VARIANT LEU-273</scope>
    <scope>POSSIBLE INVOLVEMENT IN KIDNEY AND URINARY TRACT ANOMALIES</scope>
    <scope>CHARACTERIZATION OF VARIANT LEU-273</scope>
</reference>
<reference key="8">
    <citation type="journal article" date="2006" name="Am. J. Kidney Dis.">
        <title>Mutations in Uroplakin IIIA are a rare cause of renal hypodysplasia in humans.</title>
        <authorList>
            <person name="Schoenfelder E.-M."/>
            <person name="Knueppel T."/>
            <person name="Tasic V."/>
            <person name="Miljkovic P."/>
            <person name="Konrad M."/>
            <person name="Wuehl E."/>
            <person name="Antignac C."/>
            <person name="Bakkaloglu A."/>
            <person name="Schaefer F."/>
            <person name="Weber S."/>
        </authorList>
    </citation>
    <scope>VARIANT ASP-202</scope>
    <scope>POSSIBLE INVOLVEMENT IN KIDNEY AND URINARY TRACT ANOMALIES</scope>
</reference>
<keyword id="KW-0025">Alternative splicing</keyword>
<keyword id="KW-0225">Disease variant</keyword>
<keyword id="KW-0256">Endoplasmic reticulum</keyword>
<keyword id="KW-0325">Glycoprotein</keyword>
<keyword id="KW-0472">Membrane</keyword>
<keyword id="KW-1267">Proteomics identification</keyword>
<keyword id="KW-1185">Reference proteome</keyword>
<keyword id="KW-0732">Signal</keyword>
<keyword id="KW-0812">Transmembrane</keyword>
<keyword id="KW-1133">Transmembrane helix</keyword>
<sequence length="287" mass="30670">MPPLWALLALGCLRFGSAVNLQPQLASVTFATNNPTLTTVALEKPLCMFDSKEALTGTHEVYLYVLVDSAISRNASVQDSTNTPLGSTFLQTEGGRTGPYKAVAFDLIPCSDLPSLDAIGDVSKASQILNAYLVRVGANGTCLWDPNFQGLCNAPLSAATEYRFKYVLVNMSTGLVEDQTLWSDPIRTNQLTPYSTIDTWPGRRSGGMIVITSILGSLPFFLLVGFAGAIALSLVDMGSSDGETTHDSQITQEAVPKSLGASESSYTSVNRGPPLDRAEVYSSKLQD</sequence>
<name>UPK3A_HUMAN</name>
<protein>
    <recommendedName>
        <fullName>Uroplakin-3a</fullName>
        <shortName>UP3a</shortName>
    </recommendedName>
    <alternativeName>
        <fullName>Uroplakin III</fullName>
        <shortName>UPIII</shortName>
    </alternativeName>
</protein>
<evidence type="ECO:0000250" key="1"/>
<evidence type="ECO:0000255" key="2"/>
<evidence type="ECO:0000256" key="3">
    <source>
        <dbReference type="SAM" id="MobiDB-lite"/>
    </source>
</evidence>
<evidence type="ECO:0000269" key="4">
    <source>
    </source>
</evidence>
<evidence type="ECO:0000269" key="5">
    <source>
    </source>
</evidence>
<evidence type="ECO:0000269" key="6">
    <source>
    </source>
</evidence>
<evidence type="ECO:0000269" key="7">
    <source>
    </source>
</evidence>
<evidence type="ECO:0000303" key="8">
    <source>
    </source>
</evidence>
<evidence type="ECO:0000305" key="9"/>
<accession>O75631</accession>
<accession>B0QY25</accession>
<accession>O60261</accession>
<accession>Q32N05</accession>
<accession>Q5TII6</accession>